<organism>
    <name type="scientific">Roseobacter denitrificans (strain ATCC 33942 / OCh 114)</name>
    <name type="common">Erythrobacter sp. (strain OCh 114)</name>
    <name type="synonym">Roseobacter denitrificans</name>
    <dbReference type="NCBI Taxonomy" id="375451"/>
    <lineage>
        <taxon>Bacteria</taxon>
        <taxon>Pseudomonadati</taxon>
        <taxon>Pseudomonadota</taxon>
        <taxon>Alphaproteobacteria</taxon>
        <taxon>Rhodobacterales</taxon>
        <taxon>Roseobacteraceae</taxon>
        <taxon>Roseobacter</taxon>
    </lineage>
</organism>
<dbReference type="EC" id="2.5.1.19" evidence="1"/>
<dbReference type="EMBL" id="CP000362">
    <property type="protein sequence ID" value="ABG33371.1"/>
    <property type="molecule type" value="Genomic_DNA"/>
</dbReference>
<dbReference type="RefSeq" id="WP_011569982.1">
    <property type="nucleotide sequence ID" value="NC_008209.1"/>
</dbReference>
<dbReference type="SMR" id="Q161H2"/>
<dbReference type="STRING" id="375451.RD1_3914"/>
<dbReference type="KEGG" id="rde:RD1_3914"/>
<dbReference type="eggNOG" id="COG0128">
    <property type="taxonomic scope" value="Bacteria"/>
</dbReference>
<dbReference type="HOGENOM" id="CLU_024321_0_1_5"/>
<dbReference type="OrthoDB" id="9809920at2"/>
<dbReference type="UniPathway" id="UPA00053">
    <property type="reaction ID" value="UER00089"/>
</dbReference>
<dbReference type="Proteomes" id="UP000007029">
    <property type="component" value="Chromosome"/>
</dbReference>
<dbReference type="GO" id="GO:0005737">
    <property type="term" value="C:cytoplasm"/>
    <property type="evidence" value="ECO:0007669"/>
    <property type="project" value="UniProtKB-SubCell"/>
</dbReference>
<dbReference type="GO" id="GO:0003866">
    <property type="term" value="F:3-phosphoshikimate 1-carboxyvinyltransferase activity"/>
    <property type="evidence" value="ECO:0007669"/>
    <property type="project" value="UniProtKB-UniRule"/>
</dbReference>
<dbReference type="GO" id="GO:0008652">
    <property type="term" value="P:amino acid biosynthetic process"/>
    <property type="evidence" value="ECO:0007669"/>
    <property type="project" value="UniProtKB-KW"/>
</dbReference>
<dbReference type="GO" id="GO:0009073">
    <property type="term" value="P:aromatic amino acid family biosynthetic process"/>
    <property type="evidence" value="ECO:0007669"/>
    <property type="project" value="UniProtKB-KW"/>
</dbReference>
<dbReference type="GO" id="GO:0009423">
    <property type="term" value="P:chorismate biosynthetic process"/>
    <property type="evidence" value="ECO:0007669"/>
    <property type="project" value="UniProtKB-UniRule"/>
</dbReference>
<dbReference type="CDD" id="cd01556">
    <property type="entry name" value="EPSP_synthase"/>
    <property type="match status" value="1"/>
</dbReference>
<dbReference type="FunFam" id="3.65.10.10:FF:000005">
    <property type="entry name" value="3-phosphoshikimate 1-carboxyvinyltransferase"/>
    <property type="match status" value="1"/>
</dbReference>
<dbReference type="Gene3D" id="3.65.10.10">
    <property type="entry name" value="Enolpyruvate transferase domain"/>
    <property type="match status" value="2"/>
</dbReference>
<dbReference type="HAMAP" id="MF_00210">
    <property type="entry name" value="EPSP_synth"/>
    <property type="match status" value="1"/>
</dbReference>
<dbReference type="InterPro" id="IPR001986">
    <property type="entry name" value="Enolpyruvate_Tfrase_dom"/>
</dbReference>
<dbReference type="InterPro" id="IPR036968">
    <property type="entry name" value="Enolpyruvate_Tfrase_sf"/>
</dbReference>
<dbReference type="InterPro" id="IPR006264">
    <property type="entry name" value="EPSP_synthase"/>
</dbReference>
<dbReference type="InterPro" id="IPR023193">
    <property type="entry name" value="EPSP_synthase_CS"/>
</dbReference>
<dbReference type="InterPro" id="IPR013792">
    <property type="entry name" value="RNA3'P_cycl/enolpyr_Trfase_a/b"/>
</dbReference>
<dbReference type="NCBIfam" id="TIGR01356">
    <property type="entry name" value="aroA"/>
    <property type="match status" value="1"/>
</dbReference>
<dbReference type="PANTHER" id="PTHR21090">
    <property type="entry name" value="AROM/DEHYDROQUINATE SYNTHASE"/>
    <property type="match status" value="1"/>
</dbReference>
<dbReference type="PANTHER" id="PTHR21090:SF5">
    <property type="entry name" value="PENTAFUNCTIONAL AROM POLYPEPTIDE"/>
    <property type="match status" value="1"/>
</dbReference>
<dbReference type="Pfam" id="PF00275">
    <property type="entry name" value="EPSP_synthase"/>
    <property type="match status" value="1"/>
</dbReference>
<dbReference type="PIRSF" id="PIRSF000505">
    <property type="entry name" value="EPSPS"/>
    <property type="match status" value="1"/>
</dbReference>
<dbReference type="SUPFAM" id="SSF55205">
    <property type="entry name" value="EPT/RTPC-like"/>
    <property type="match status" value="1"/>
</dbReference>
<dbReference type="PROSITE" id="PS00104">
    <property type="entry name" value="EPSP_SYNTHASE_1"/>
    <property type="match status" value="1"/>
</dbReference>
<dbReference type="PROSITE" id="PS00885">
    <property type="entry name" value="EPSP_SYNTHASE_2"/>
    <property type="match status" value="1"/>
</dbReference>
<sequence length="450" mass="46478">MSSHGAPIPMTSSACGPLTGEARVPGDKSISHRSLILGALSVGETRISGLLEGQDVLDTAKAMRAFGATVTDHGGGEWSVHGVGVGGFAEPDGVIDCGNSGTGVRLIMGAMATSPISATFTGDASLNGRPMARVTDPLALFGAQSYGRQGGRLPMTVVGAAEPVPVTYTVPVPSAQVKSAVLLAGLNAPGQTVVIEAEATRDHTERMLAGFGAEISVEDADEGRVITLTGQPELKSQKIDVPRDPSSAAFPVCAALIVPGSDVLVPGIGLNPTRAGLFTTLREMGADLTYENERVEGGEPVADLRARFSPDLTGIEVPPARAASMIDEYPVLSVVASFARGDTVMRGVKELRVKESDRIDAMASGLRANGVAVEDGPDWWVVTGRGHGNVAGGATCASFLDHRIAMSFLVMGMATQKPVTVDDAGPIATSFPIFEPLMAQLGARIQRDNG</sequence>
<gene>
    <name evidence="1" type="primary">aroA</name>
    <name type="ordered locus">RD1_3914</name>
</gene>
<name>AROA_ROSDO</name>
<feature type="chain" id="PRO_1000058614" description="3-phosphoshikimate 1-carboxyvinyltransferase">
    <location>
        <begin position="1"/>
        <end position="450"/>
    </location>
</feature>
<feature type="region of interest" description="Disordered" evidence="2">
    <location>
        <begin position="1"/>
        <end position="23"/>
    </location>
</feature>
<feature type="active site" description="Proton acceptor" evidence="1">
    <location>
        <position position="327"/>
    </location>
</feature>
<feature type="binding site" evidence="1">
    <location>
        <position position="28"/>
    </location>
    <ligand>
        <name>3-phosphoshikimate</name>
        <dbReference type="ChEBI" id="CHEBI:145989"/>
    </ligand>
</feature>
<feature type="binding site" evidence="1">
    <location>
        <position position="28"/>
    </location>
    <ligand>
        <name>phosphoenolpyruvate</name>
        <dbReference type="ChEBI" id="CHEBI:58702"/>
    </ligand>
</feature>
<feature type="binding site" evidence="1">
    <location>
        <position position="29"/>
    </location>
    <ligand>
        <name>3-phosphoshikimate</name>
        <dbReference type="ChEBI" id="CHEBI:145989"/>
    </ligand>
</feature>
<feature type="binding site" evidence="1">
    <location>
        <position position="33"/>
    </location>
    <ligand>
        <name>3-phosphoshikimate</name>
        <dbReference type="ChEBI" id="CHEBI:145989"/>
    </ligand>
</feature>
<feature type="binding site" evidence="1">
    <location>
        <position position="101"/>
    </location>
    <ligand>
        <name>phosphoenolpyruvate</name>
        <dbReference type="ChEBI" id="CHEBI:58702"/>
    </ligand>
</feature>
<feature type="binding site" evidence="1">
    <location>
        <position position="129"/>
    </location>
    <ligand>
        <name>phosphoenolpyruvate</name>
        <dbReference type="ChEBI" id="CHEBI:58702"/>
    </ligand>
</feature>
<feature type="binding site" evidence="1">
    <location>
        <position position="174"/>
    </location>
    <ligand>
        <name>3-phosphoshikimate</name>
        <dbReference type="ChEBI" id="CHEBI:145989"/>
    </ligand>
</feature>
<feature type="binding site" evidence="1">
    <location>
        <position position="176"/>
    </location>
    <ligand>
        <name>3-phosphoshikimate</name>
        <dbReference type="ChEBI" id="CHEBI:145989"/>
    </ligand>
</feature>
<feature type="binding site" evidence="1">
    <location>
        <position position="176"/>
    </location>
    <ligand>
        <name>phosphoenolpyruvate</name>
        <dbReference type="ChEBI" id="CHEBI:58702"/>
    </ligand>
</feature>
<feature type="binding site" evidence="1">
    <location>
        <position position="327"/>
    </location>
    <ligand>
        <name>3-phosphoshikimate</name>
        <dbReference type="ChEBI" id="CHEBI:145989"/>
    </ligand>
</feature>
<feature type="binding site" evidence="1">
    <location>
        <position position="354"/>
    </location>
    <ligand>
        <name>3-phosphoshikimate</name>
        <dbReference type="ChEBI" id="CHEBI:145989"/>
    </ligand>
</feature>
<feature type="binding site" evidence="1">
    <location>
        <position position="358"/>
    </location>
    <ligand>
        <name>phosphoenolpyruvate</name>
        <dbReference type="ChEBI" id="CHEBI:58702"/>
    </ligand>
</feature>
<feature type="binding site" evidence="1">
    <location>
        <position position="403"/>
    </location>
    <ligand>
        <name>phosphoenolpyruvate</name>
        <dbReference type="ChEBI" id="CHEBI:58702"/>
    </ligand>
</feature>
<accession>Q161H2</accession>
<reference key="1">
    <citation type="journal article" date="2007" name="J. Bacteriol.">
        <title>The complete genome sequence of Roseobacter denitrificans reveals a mixotrophic rather than photosynthetic metabolism.</title>
        <authorList>
            <person name="Swingley W.D."/>
            <person name="Sadekar S."/>
            <person name="Mastrian S.D."/>
            <person name="Matthies H.J."/>
            <person name="Hao J."/>
            <person name="Ramos H."/>
            <person name="Acharya C.R."/>
            <person name="Conrad A.L."/>
            <person name="Taylor H.L."/>
            <person name="Dejesa L.C."/>
            <person name="Shah M.K."/>
            <person name="O'Huallachain M.E."/>
            <person name="Lince M.T."/>
            <person name="Blankenship R.E."/>
            <person name="Beatty J.T."/>
            <person name="Touchman J.W."/>
        </authorList>
    </citation>
    <scope>NUCLEOTIDE SEQUENCE [LARGE SCALE GENOMIC DNA]</scope>
    <source>
        <strain>ATCC 33942 / OCh 114</strain>
    </source>
</reference>
<keyword id="KW-0028">Amino-acid biosynthesis</keyword>
<keyword id="KW-0057">Aromatic amino acid biosynthesis</keyword>
<keyword id="KW-0963">Cytoplasm</keyword>
<keyword id="KW-1185">Reference proteome</keyword>
<keyword id="KW-0808">Transferase</keyword>
<evidence type="ECO:0000255" key="1">
    <source>
        <dbReference type="HAMAP-Rule" id="MF_00210"/>
    </source>
</evidence>
<evidence type="ECO:0000256" key="2">
    <source>
        <dbReference type="SAM" id="MobiDB-lite"/>
    </source>
</evidence>
<proteinExistence type="inferred from homology"/>
<protein>
    <recommendedName>
        <fullName evidence="1">3-phosphoshikimate 1-carboxyvinyltransferase</fullName>
        <ecNumber evidence="1">2.5.1.19</ecNumber>
    </recommendedName>
    <alternativeName>
        <fullName evidence="1">5-enolpyruvylshikimate-3-phosphate synthase</fullName>
        <shortName evidence="1">EPSP synthase</shortName>
        <shortName evidence="1">EPSPS</shortName>
    </alternativeName>
</protein>
<comment type="function">
    <text evidence="1">Catalyzes the transfer of the enolpyruvyl moiety of phosphoenolpyruvate (PEP) to the 5-hydroxyl of shikimate-3-phosphate (S3P) to produce enolpyruvyl shikimate-3-phosphate and inorganic phosphate.</text>
</comment>
<comment type="catalytic activity">
    <reaction evidence="1">
        <text>3-phosphoshikimate + phosphoenolpyruvate = 5-O-(1-carboxyvinyl)-3-phosphoshikimate + phosphate</text>
        <dbReference type="Rhea" id="RHEA:21256"/>
        <dbReference type="ChEBI" id="CHEBI:43474"/>
        <dbReference type="ChEBI" id="CHEBI:57701"/>
        <dbReference type="ChEBI" id="CHEBI:58702"/>
        <dbReference type="ChEBI" id="CHEBI:145989"/>
        <dbReference type="EC" id="2.5.1.19"/>
    </reaction>
    <physiologicalReaction direction="left-to-right" evidence="1">
        <dbReference type="Rhea" id="RHEA:21257"/>
    </physiologicalReaction>
</comment>
<comment type="pathway">
    <text evidence="1">Metabolic intermediate biosynthesis; chorismate biosynthesis; chorismate from D-erythrose 4-phosphate and phosphoenolpyruvate: step 6/7.</text>
</comment>
<comment type="subunit">
    <text evidence="1">Monomer.</text>
</comment>
<comment type="subcellular location">
    <subcellularLocation>
        <location evidence="1">Cytoplasm</location>
    </subcellularLocation>
</comment>
<comment type="similarity">
    <text evidence="1">Belongs to the EPSP synthase family.</text>
</comment>